<comment type="similarity">
    <text evidence="1">Belongs to the UPF0301 (AlgH) family.</text>
</comment>
<protein>
    <recommendedName>
        <fullName evidence="1">UPF0301 protein CHU_1773</fullName>
    </recommendedName>
</protein>
<sequence length="182" mass="20912">MLTKGKILISEPYLGDSTFERSVVLLCEHNDSGAFGFMLNKSTTLTINSVLEEQLTFEQNLFLGGPVAQDSLFFLLRQDRAILKDSVHIKDDLYWGGDFEHLKTLIQEGTLELDNCRFFLGYSGWGEDQLEYELEKHSWIIADINSEDMFVKNPESMWQNVLRSMGGDYKVLSNYPIDPRLN</sequence>
<feature type="chain" id="PRO_0000258820" description="UPF0301 protein CHU_1773">
    <location>
        <begin position="1"/>
        <end position="182"/>
    </location>
</feature>
<proteinExistence type="inferred from homology"/>
<dbReference type="EMBL" id="CP000383">
    <property type="protein sequence ID" value="ABG59040.1"/>
    <property type="molecule type" value="Genomic_DNA"/>
</dbReference>
<dbReference type="RefSeq" id="WP_011585157.1">
    <property type="nucleotide sequence ID" value="NC_008255.1"/>
</dbReference>
<dbReference type="SMR" id="Q11U74"/>
<dbReference type="STRING" id="269798.CHU_1773"/>
<dbReference type="KEGG" id="chu:CHU_1773"/>
<dbReference type="eggNOG" id="COG1678">
    <property type="taxonomic scope" value="Bacteria"/>
</dbReference>
<dbReference type="HOGENOM" id="CLU_057596_2_1_10"/>
<dbReference type="OrthoDB" id="9807486at2"/>
<dbReference type="Proteomes" id="UP000001822">
    <property type="component" value="Chromosome"/>
</dbReference>
<dbReference type="GO" id="GO:0005829">
    <property type="term" value="C:cytosol"/>
    <property type="evidence" value="ECO:0007669"/>
    <property type="project" value="TreeGrafter"/>
</dbReference>
<dbReference type="Gene3D" id="3.40.1740.10">
    <property type="entry name" value="VC0467-like"/>
    <property type="match status" value="1"/>
</dbReference>
<dbReference type="HAMAP" id="MF_00758">
    <property type="entry name" value="UPF0301"/>
    <property type="match status" value="1"/>
</dbReference>
<dbReference type="InterPro" id="IPR003774">
    <property type="entry name" value="AlgH-like"/>
</dbReference>
<dbReference type="PANTHER" id="PTHR30327">
    <property type="entry name" value="UNCHARACTERIZED PROTEIN YQGE"/>
    <property type="match status" value="1"/>
</dbReference>
<dbReference type="PANTHER" id="PTHR30327:SF1">
    <property type="entry name" value="UPF0301 PROTEIN YQGE"/>
    <property type="match status" value="1"/>
</dbReference>
<dbReference type="Pfam" id="PF02622">
    <property type="entry name" value="DUF179"/>
    <property type="match status" value="1"/>
</dbReference>
<dbReference type="SUPFAM" id="SSF143456">
    <property type="entry name" value="VC0467-like"/>
    <property type="match status" value="1"/>
</dbReference>
<reference key="1">
    <citation type="journal article" date="2007" name="Appl. Environ. Microbiol.">
        <title>Genome sequence of the cellulolytic gliding bacterium Cytophaga hutchinsonii.</title>
        <authorList>
            <person name="Xie G."/>
            <person name="Bruce D.C."/>
            <person name="Challacombe J.F."/>
            <person name="Chertkov O."/>
            <person name="Detter J.C."/>
            <person name="Gilna P."/>
            <person name="Han C.S."/>
            <person name="Lucas S."/>
            <person name="Misra M."/>
            <person name="Myers G.L."/>
            <person name="Richardson P."/>
            <person name="Tapia R."/>
            <person name="Thayer N."/>
            <person name="Thompson L.S."/>
            <person name="Brettin T.S."/>
            <person name="Henrissat B."/>
            <person name="Wilson D.B."/>
            <person name="McBride M.J."/>
        </authorList>
    </citation>
    <scope>NUCLEOTIDE SEQUENCE [LARGE SCALE GENOMIC DNA]</scope>
    <source>
        <strain>ATCC 33406 / DSM 1761 / JCM 20678 / CIP 103989 / IAM 12607 / NBRC 15051 / NCIMB 9469 / D465</strain>
    </source>
</reference>
<organism>
    <name type="scientific">Cytophaga hutchinsonii (strain ATCC 33406 / DSM 1761 / CIP 103989 / NBRC 15051 / NCIMB 9469 / D465)</name>
    <dbReference type="NCBI Taxonomy" id="269798"/>
    <lineage>
        <taxon>Bacteria</taxon>
        <taxon>Pseudomonadati</taxon>
        <taxon>Bacteroidota</taxon>
        <taxon>Cytophagia</taxon>
        <taxon>Cytophagales</taxon>
        <taxon>Cytophagaceae</taxon>
        <taxon>Cytophaga</taxon>
    </lineage>
</organism>
<name>Y1773_CYTH3</name>
<keyword id="KW-1185">Reference proteome</keyword>
<gene>
    <name type="ordered locus">CHU_1773</name>
</gene>
<evidence type="ECO:0000255" key="1">
    <source>
        <dbReference type="HAMAP-Rule" id="MF_00758"/>
    </source>
</evidence>
<accession>Q11U74</accession>